<dbReference type="EC" id="5.3.1.28" evidence="1"/>
<dbReference type="EMBL" id="AL590842">
    <property type="protein sequence ID" value="CAL21837.1"/>
    <property type="molecule type" value="Genomic_DNA"/>
</dbReference>
<dbReference type="EMBL" id="AE009952">
    <property type="protein sequence ID" value="AAM84528.1"/>
    <property type="molecule type" value="Genomic_DNA"/>
</dbReference>
<dbReference type="EMBL" id="AE017042">
    <property type="protein sequence ID" value="AAS60955.1"/>
    <property type="molecule type" value="Genomic_DNA"/>
</dbReference>
<dbReference type="PIR" id="AB0394">
    <property type="entry name" value="AB0394"/>
</dbReference>
<dbReference type="RefSeq" id="YP_002348145.1">
    <property type="nucleotide sequence ID" value="NC_003143.1"/>
</dbReference>
<dbReference type="SMR" id="Q8ZBY7"/>
<dbReference type="STRING" id="214092.YPO3243"/>
<dbReference type="PaxDb" id="214092-YPO3243"/>
<dbReference type="DNASU" id="1145894"/>
<dbReference type="EnsemblBacteria" id="AAS60955">
    <property type="protein sequence ID" value="AAS60955"/>
    <property type="gene ID" value="YP_0689"/>
</dbReference>
<dbReference type="KEGG" id="ype:YPO3243"/>
<dbReference type="KEGG" id="ypk:y0947"/>
<dbReference type="KEGG" id="ypm:YP_0689"/>
<dbReference type="PATRIC" id="fig|214092.21.peg.3704"/>
<dbReference type="eggNOG" id="COG0279">
    <property type="taxonomic scope" value="Bacteria"/>
</dbReference>
<dbReference type="HOGENOM" id="CLU_080999_4_0_6"/>
<dbReference type="BRENDA" id="5.3.1.28">
    <property type="organism ID" value="4559"/>
</dbReference>
<dbReference type="UniPathway" id="UPA00041">
    <property type="reaction ID" value="UER00436"/>
</dbReference>
<dbReference type="UniPathway" id="UPA00958"/>
<dbReference type="Proteomes" id="UP000000815">
    <property type="component" value="Chromosome"/>
</dbReference>
<dbReference type="Proteomes" id="UP000001019">
    <property type="component" value="Chromosome"/>
</dbReference>
<dbReference type="Proteomes" id="UP000002490">
    <property type="component" value="Chromosome"/>
</dbReference>
<dbReference type="GO" id="GO:0005829">
    <property type="term" value="C:cytosol"/>
    <property type="evidence" value="ECO:0000318"/>
    <property type="project" value="GO_Central"/>
</dbReference>
<dbReference type="GO" id="GO:0097367">
    <property type="term" value="F:carbohydrate derivative binding"/>
    <property type="evidence" value="ECO:0007669"/>
    <property type="project" value="InterPro"/>
</dbReference>
<dbReference type="GO" id="GO:0008968">
    <property type="term" value="F:D-sedoheptulose 7-phosphate isomerase activity"/>
    <property type="evidence" value="ECO:0000318"/>
    <property type="project" value="GO_Central"/>
</dbReference>
<dbReference type="GO" id="GO:0008270">
    <property type="term" value="F:zinc ion binding"/>
    <property type="evidence" value="ECO:0007669"/>
    <property type="project" value="UniProtKB-UniRule"/>
</dbReference>
<dbReference type="GO" id="GO:2001061">
    <property type="term" value="P:D-glycero-D-manno-heptose 7-phosphate biosynthetic process"/>
    <property type="evidence" value="ECO:0000318"/>
    <property type="project" value="GO_Central"/>
</dbReference>
<dbReference type="GO" id="GO:0009244">
    <property type="term" value="P:lipopolysaccharide core region biosynthetic process"/>
    <property type="evidence" value="ECO:0007669"/>
    <property type="project" value="UniProtKB-UniPathway"/>
</dbReference>
<dbReference type="CDD" id="cd05006">
    <property type="entry name" value="SIS_GmhA"/>
    <property type="match status" value="1"/>
</dbReference>
<dbReference type="FunFam" id="3.40.50.10490:FF:000013">
    <property type="entry name" value="Phosphoheptose isomerase"/>
    <property type="match status" value="1"/>
</dbReference>
<dbReference type="Gene3D" id="3.40.50.10490">
    <property type="entry name" value="Glucose-6-phosphate isomerase like protein, domain 1"/>
    <property type="match status" value="1"/>
</dbReference>
<dbReference type="HAMAP" id="MF_00067">
    <property type="entry name" value="GmhA"/>
    <property type="match status" value="1"/>
</dbReference>
<dbReference type="InterPro" id="IPR035461">
    <property type="entry name" value="GmhA/DiaA"/>
</dbReference>
<dbReference type="InterPro" id="IPR004515">
    <property type="entry name" value="Phosphoheptose_Isoase"/>
</dbReference>
<dbReference type="InterPro" id="IPR001347">
    <property type="entry name" value="SIS_dom"/>
</dbReference>
<dbReference type="InterPro" id="IPR046348">
    <property type="entry name" value="SIS_dom_sf"/>
</dbReference>
<dbReference type="InterPro" id="IPR050099">
    <property type="entry name" value="SIS_GmhA/DiaA_subfam"/>
</dbReference>
<dbReference type="NCBIfam" id="TIGR00441">
    <property type="entry name" value="gmhA"/>
    <property type="match status" value="1"/>
</dbReference>
<dbReference type="NCBIfam" id="NF001628">
    <property type="entry name" value="PRK00414.1"/>
    <property type="match status" value="1"/>
</dbReference>
<dbReference type="PANTHER" id="PTHR30390:SF7">
    <property type="entry name" value="PHOSPHOHEPTOSE ISOMERASE"/>
    <property type="match status" value="1"/>
</dbReference>
<dbReference type="PANTHER" id="PTHR30390">
    <property type="entry name" value="SEDOHEPTULOSE 7-PHOSPHATE ISOMERASE / DNAA INITIATOR-ASSOCIATING FACTOR FOR REPLICATION INITIATION"/>
    <property type="match status" value="1"/>
</dbReference>
<dbReference type="Pfam" id="PF13580">
    <property type="entry name" value="SIS_2"/>
    <property type="match status" value="1"/>
</dbReference>
<dbReference type="SUPFAM" id="SSF53697">
    <property type="entry name" value="SIS domain"/>
    <property type="match status" value="1"/>
</dbReference>
<dbReference type="PROSITE" id="PS51464">
    <property type="entry name" value="SIS"/>
    <property type="match status" value="1"/>
</dbReference>
<sequence length="193" mass="20987">MYHDLIRSELNEAADTLANFLKDDSNIDAIQRAAILLADSFKAGGKVLSCGNGGSHCDAMHFAEELTGRYRENRPGYPAIAISDVSHLSCVSNDFGYDYVFSRYVEAVDREGDVLLGISTSGNSGNIIKAIEAARAKGMKVITLTGKDGGKMAGSADIEIRVPHFGYADRIQEIHIKVIHILIQLIEKEMVKA</sequence>
<gene>
    <name evidence="1" type="primary">gmhA</name>
    <name type="synonym">lpcA</name>
    <name type="ordered locus">YPO3243</name>
    <name type="ordered locus">y0947</name>
    <name type="ordered locus">YP_0689</name>
</gene>
<reference key="1">
    <citation type="journal article" date="2001" name="Nature">
        <title>Genome sequence of Yersinia pestis, the causative agent of plague.</title>
        <authorList>
            <person name="Parkhill J."/>
            <person name="Wren B.W."/>
            <person name="Thomson N.R."/>
            <person name="Titball R.W."/>
            <person name="Holden M.T.G."/>
            <person name="Prentice M.B."/>
            <person name="Sebaihia M."/>
            <person name="James K.D."/>
            <person name="Churcher C.M."/>
            <person name="Mungall K.L."/>
            <person name="Baker S."/>
            <person name="Basham D."/>
            <person name="Bentley S.D."/>
            <person name="Brooks K."/>
            <person name="Cerdeno-Tarraga A.-M."/>
            <person name="Chillingworth T."/>
            <person name="Cronin A."/>
            <person name="Davies R.M."/>
            <person name="Davis P."/>
            <person name="Dougan G."/>
            <person name="Feltwell T."/>
            <person name="Hamlin N."/>
            <person name="Holroyd S."/>
            <person name="Jagels K."/>
            <person name="Karlyshev A.V."/>
            <person name="Leather S."/>
            <person name="Moule S."/>
            <person name="Oyston P.C.F."/>
            <person name="Quail M.A."/>
            <person name="Rutherford K.M."/>
            <person name="Simmonds M."/>
            <person name="Skelton J."/>
            <person name="Stevens K."/>
            <person name="Whitehead S."/>
            <person name="Barrell B.G."/>
        </authorList>
    </citation>
    <scope>NUCLEOTIDE SEQUENCE [LARGE SCALE GENOMIC DNA]</scope>
    <source>
        <strain>CO-92 / Biovar Orientalis</strain>
    </source>
</reference>
<reference key="2">
    <citation type="journal article" date="2002" name="J. Bacteriol.">
        <title>Genome sequence of Yersinia pestis KIM.</title>
        <authorList>
            <person name="Deng W."/>
            <person name="Burland V."/>
            <person name="Plunkett G. III"/>
            <person name="Boutin A."/>
            <person name="Mayhew G.F."/>
            <person name="Liss P."/>
            <person name="Perna N.T."/>
            <person name="Rose D.J."/>
            <person name="Mau B."/>
            <person name="Zhou S."/>
            <person name="Schwartz D.C."/>
            <person name="Fetherston J.D."/>
            <person name="Lindler L.E."/>
            <person name="Brubaker R.R."/>
            <person name="Plano G.V."/>
            <person name="Straley S.C."/>
            <person name="McDonough K.A."/>
            <person name="Nilles M.L."/>
            <person name="Matson J.S."/>
            <person name="Blattner F.R."/>
            <person name="Perry R.D."/>
        </authorList>
    </citation>
    <scope>NUCLEOTIDE SEQUENCE [LARGE SCALE GENOMIC DNA]</scope>
    <source>
        <strain>KIM10+ / Biovar Mediaevalis</strain>
    </source>
</reference>
<reference key="3">
    <citation type="journal article" date="2004" name="DNA Res.">
        <title>Complete genome sequence of Yersinia pestis strain 91001, an isolate avirulent to humans.</title>
        <authorList>
            <person name="Song Y."/>
            <person name="Tong Z."/>
            <person name="Wang J."/>
            <person name="Wang L."/>
            <person name="Guo Z."/>
            <person name="Han Y."/>
            <person name="Zhang J."/>
            <person name="Pei D."/>
            <person name="Zhou D."/>
            <person name="Qin H."/>
            <person name="Pang X."/>
            <person name="Han Y."/>
            <person name="Zhai J."/>
            <person name="Li M."/>
            <person name="Cui B."/>
            <person name="Qi Z."/>
            <person name="Jin L."/>
            <person name="Dai R."/>
            <person name="Chen F."/>
            <person name="Li S."/>
            <person name="Ye C."/>
            <person name="Du Z."/>
            <person name="Lin W."/>
            <person name="Wang J."/>
            <person name="Yu J."/>
            <person name="Yang H."/>
            <person name="Wang J."/>
            <person name="Huang P."/>
            <person name="Yang R."/>
        </authorList>
    </citation>
    <scope>NUCLEOTIDE SEQUENCE [LARGE SCALE GENOMIC DNA]</scope>
    <source>
        <strain>91001 / Biovar Mediaevalis</strain>
    </source>
</reference>
<reference key="4">
    <citation type="journal article" date="2002" name="Microbiology">
        <title>Novel pathways for biosynthesis of nucleotide-activated glycero-manno-heptose precursors of bacterial glycoproteins and cell surface polysaccharides.</title>
        <authorList>
            <person name="Valvano M.A."/>
            <person name="Messner P."/>
            <person name="Kosma P."/>
        </authorList>
    </citation>
    <scope>BIOSYNTHESIS OF NUCLEOTIDE-ACTIVATED GLYCERO-MANNO-HEPTOSE</scope>
</reference>
<accession>Q8ZBY7</accession>
<accession>Q0WC43</accession>
<comment type="function">
    <text evidence="1">Catalyzes the isomerization of sedoheptulose 7-phosphate in D-glycero-D-manno-heptose 7-phosphate.</text>
</comment>
<comment type="catalytic activity">
    <reaction evidence="1">
        <text>2 D-sedoheptulose 7-phosphate = D-glycero-alpha-D-manno-heptose 7-phosphate + D-glycero-beta-D-manno-heptose 7-phosphate</text>
        <dbReference type="Rhea" id="RHEA:27489"/>
        <dbReference type="ChEBI" id="CHEBI:57483"/>
        <dbReference type="ChEBI" id="CHEBI:60203"/>
        <dbReference type="ChEBI" id="CHEBI:60204"/>
        <dbReference type="EC" id="5.3.1.28"/>
    </reaction>
</comment>
<comment type="cofactor">
    <cofactor evidence="1">
        <name>Zn(2+)</name>
        <dbReference type="ChEBI" id="CHEBI:29105"/>
    </cofactor>
    <text evidence="1">Binds 1 zinc ion per subunit.</text>
</comment>
<comment type="pathway">
    <text evidence="1">Carbohydrate biosynthesis; D-glycero-D-manno-heptose 7-phosphate biosynthesis; D-glycero-alpha-D-manno-heptose 7-phosphate and D-glycero-beta-D-manno-heptose 7-phosphate from sedoheptulose 7-phosphate: step 1/1.</text>
</comment>
<comment type="pathway">
    <text>Bacterial outer membrane biogenesis; LPS core biosynthesis.</text>
</comment>
<comment type="subunit">
    <text evidence="1">Homotetramer.</text>
</comment>
<comment type="subcellular location">
    <subcellularLocation>
        <location evidence="1">Cytoplasm</location>
    </subcellularLocation>
</comment>
<comment type="miscellaneous">
    <text evidence="1">The reaction produces a racemic mixture of D-glycero-alpha-D-manno-heptose 7-phosphate and D-glycero-beta-D-manno-heptose 7-phosphate.</text>
</comment>
<comment type="similarity">
    <text evidence="1">Belongs to the SIS family. GmhA subfamily.</text>
</comment>
<organism>
    <name type="scientific">Yersinia pestis</name>
    <dbReference type="NCBI Taxonomy" id="632"/>
    <lineage>
        <taxon>Bacteria</taxon>
        <taxon>Pseudomonadati</taxon>
        <taxon>Pseudomonadota</taxon>
        <taxon>Gammaproteobacteria</taxon>
        <taxon>Enterobacterales</taxon>
        <taxon>Yersiniaceae</taxon>
        <taxon>Yersinia</taxon>
    </lineage>
</organism>
<evidence type="ECO:0000255" key="1">
    <source>
        <dbReference type="HAMAP-Rule" id="MF_00067"/>
    </source>
</evidence>
<evidence type="ECO:0000305" key="2"/>
<keyword id="KW-0119">Carbohydrate metabolism</keyword>
<keyword id="KW-0963">Cytoplasm</keyword>
<keyword id="KW-0413">Isomerase</keyword>
<keyword id="KW-0448">Lipopolysaccharide biosynthesis</keyword>
<keyword id="KW-0479">Metal-binding</keyword>
<keyword id="KW-1185">Reference proteome</keyword>
<keyword id="KW-0862">Zinc</keyword>
<feature type="chain" id="PRO_0000136551" description="Phosphoheptose isomerase">
    <location>
        <begin position="1"/>
        <end position="193"/>
    </location>
</feature>
<feature type="domain" description="SIS" evidence="1">
    <location>
        <begin position="37"/>
        <end position="193"/>
    </location>
</feature>
<feature type="binding site" evidence="1">
    <location>
        <begin position="52"/>
        <end position="54"/>
    </location>
    <ligand>
        <name>substrate</name>
    </ligand>
</feature>
<feature type="binding site" evidence="1">
    <location>
        <position position="61"/>
    </location>
    <ligand>
        <name>Zn(2+)</name>
        <dbReference type="ChEBI" id="CHEBI:29105"/>
    </ligand>
</feature>
<feature type="binding site" evidence="1">
    <location>
        <position position="65"/>
    </location>
    <ligand>
        <name>substrate</name>
    </ligand>
</feature>
<feature type="binding site" evidence="1">
    <location>
        <position position="65"/>
    </location>
    <ligand>
        <name>Zn(2+)</name>
        <dbReference type="ChEBI" id="CHEBI:29105"/>
    </ligand>
</feature>
<feature type="binding site" evidence="1">
    <location>
        <begin position="93"/>
        <end position="94"/>
    </location>
    <ligand>
        <name>substrate</name>
    </ligand>
</feature>
<feature type="binding site" evidence="1">
    <location>
        <begin position="119"/>
        <end position="121"/>
    </location>
    <ligand>
        <name>substrate</name>
    </ligand>
</feature>
<feature type="binding site" evidence="1">
    <location>
        <position position="124"/>
    </location>
    <ligand>
        <name>substrate</name>
    </ligand>
</feature>
<feature type="binding site" evidence="1">
    <location>
        <position position="172"/>
    </location>
    <ligand>
        <name>substrate</name>
    </ligand>
</feature>
<feature type="binding site" evidence="1">
    <location>
        <position position="172"/>
    </location>
    <ligand>
        <name>Zn(2+)</name>
        <dbReference type="ChEBI" id="CHEBI:29105"/>
    </ligand>
</feature>
<feature type="binding site" evidence="1">
    <location>
        <position position="180"/>
    </location>
    <ligand>
        <name>Zn(2+)</name>
        <dbReference type="ChEBI" id="CHEBI:29105"/>
    </ligand>
</feature>
<feature type="sequence conflict" description="In Ref. 2 and 3." evidence="2" ref="2 3">
    <original>D</original>
    <variation>G</variation>
    <location>
        <position position="109"/>
    </location>
</feature>
<name>GMHA_YERPE</name>
<proteinExistence type="inferred from homology"/>
<protein>
    <recommendedName>
        <fullName evidence="1">Phosphoheptose isomerase</fullName>
        <ecNumber evidence="1">5.3.1.28</ecNumber>
    </recommendedName>
    <alternativeName>
        <fullName evidence="1">Sedoheptulose 7-phosphate isomerase</fullName>
    </alternativeName>
</protein>